<comment type="similarity">
    <text evidence="1">Belongs to the UPF0213 family.</text>
</comment>
<evidence type="ECO:0000255" key="1">
    <source>
        <dbReference type="HAMAP-Rule" id="MF_01029"/>
    </source>
</evidence>
<accession>Q2NW13</accession>
<feature type="chain" id="PRO_0000328917" description="UPF0213 protein SG0387">
    <location>
        <begin position="1"/>
        <end position="107"/>
    </location>
</feature>
<feature type="domain" description="GIY-YIG" evidence="1">
    <location>
        <begin position="4"/>
        <end position="79"/>
    </location>
</feature>
<proteinExistence type="inferred from homology"/>
<protein>
    <recommendedName>
        <fullName evidence="1">UPF0213 protein SG0387</fullName>
    </recommendedName>
</protein>
<name>Y387_SODGM</name>
<gene>
    <name type="ordered locus">SG0387</name>
</gene>
<organism>
    <name type="scientific">Sodalis glossinidius (strain morsitans)</name>
    <dbReference type="NCBI Taxonomy" id="343509"/>
    <lineage>
        <taxon>Bacteria</taxon>
        <taxon>Pseudomonadati</taxon>
        <taxon>Pseudomonadota</taxon>
        <taxon>Gammaproteobacteria</taxon>
        <taxon>Enterobacterales</taxon>
        <taxon>Bruguierivoracaceae</taxon>
        <taxon>Sodalis</taxon>
    </lineage>
</organism>
<dbReference type="EMBL" id="AP008232">
    <property type="protein sequence ID" value="BAE73662.1"/>
    <property type="molecule type" value="Genomic_DNA"/>
</dbReference>
<dbReference type="RefSeq" id="WP_011410250.1">
    <property type="nucleotide sequence ID" value="NC_007712.1"/>
</dbReference>
<dbReference type="SMR" id="Q2NW13"/>
<dbReference type="KEGG" id="sgl:SG0387"/>
<dbReference type="eggNOG" id="COG2827">
    <property type="taxonomic scope" value="Bacteria"/>
</dbReference>
<dbReference type="HOGENOM" id="CLU_135650_0_0_6"/>
<dbReference type="OrthoDB" id="9797095at2"/>
<dbReference type="Proteomes" id="UP000001932">
    <property type="component" value="Chromosome"/>
</dbReference>
<dbReference type="CDD" id="cd10456">
    <property type="entry name" value="GIY-YIG_UPF0213"/>
    <property type="match status" value="1"/>
</dbReference>
<dbReference type="Gene3D" id="3.40.1440.10">
    <property type="entry name" value="GIY-YIG endonuclease"/>
    <property type="match status" value="1"/>
</dbReference>
<dbReference type="HAMAP" id="MF_01029">
    <property type="entry name" value="UPF0213"/>
    <property type="match status" value="1"/>
</dbReference>
<dbReference type="InterPro" id="IPR000305">
    <property type="entry name" value="GIY-YIG_endonuc"/>
</dbReference>
<dbReference type="InterPro" id="IPR035901">
    <property type="entry name" value="GIY-YIG_endonuc_sf"/>
</dbReference>
<dbReference type="InterPro" id="IPR050190">
    <property type="entry name" value="UPF0213_domain"/>
</dbReference>
<dbReference type="InterPro" id="IPR022992">
    <property type="entry name" value="UPF0213_GIY-YIG_endonuc"/>
</dbReference>
<dbReference type="PANTHER" id="PTHR34477">
    <property type="entry name" value="UPF0213 PROTEIN YHBQ"/>
    <property type="match status" value="1"/>
</dbReference>
<dbReference type="PANTHER" id="PTHR34477:SF1">
    <property type="entry name" value="UPF0213 PROTEIN YHBQ"/>
    <property type="match status" value="1"/>
</dbReference>
<dbReference type="Pfam" id="PF01541">
    <property type="entry name" value="GIY-YIG"/>
    <property type="match status" value="1"/>
</dbReference>
<dbReference type="SUPFAM" id="SSF82771">
    <property type="entry name" value="GIY-YIG endonuclease"/>
    <property type="match status" value="1"/>
</dbReference>
<dbReference type="PROSITE" id="PS50164">
    <property type="entry name" value="GIY_YIG"/>
    <property type="match status" value="1"/>
</dbReference>
<sequence length="107" mass="11955">MCSSLWHLYLIRTASGMLYTGITTDVQRRLDQHQRGGGAKSLRGKGPLTLVFQSPAGDRSRVLRWEYRVKQLSRAQKEHFVALQEQALPHFGLEHSALAAGKSAPAR</sequence>
<reference key="1">
    <citation type="journal article" date="2006" name="Genome Res.">
        <title>Massive genome erosion and functional adaptations provide insights into the symbiotic lifestyle of Sodalis glossinidius in the tsetse host.</title>
        <authorList>
            <person name="Toh H."/>
            <person name="Weiss B.L."/>
            <person name="Perkin S.A.H."/>
            <person name="Yamashita A."/>
            <person name="Oshima K."/>
            <person name="Hattori M."/>
            <person name="Aksoy S."/>
        </authorList>
    </citation>
    <scope>NUCLEOTIDE SEQUENCE [LARGE SCALE GENOMIC DNA]</scope>
    <source>
        <strain>morsitans</strain>
    </source>
</reference>